<name>GPMI_COXBU</name>
<accession>Q83BH2</accession>
<gene>
    <name evidence="1" type="primary">gpmI</name>
    <name type="ordered locus">CBU_1536</name>
</gene>
<comment type="function">
    <text evidence="1">Catalyzes the interconversion of 2-phosphoglycerate and 3-phosphoglycerate.</text>
</comment>
<comment type="catalytic activity">
    <reaction evidence="1">
        <text>(2R)-2-phosphoglycerate = (2R)-3-phosphoglycerate</text>
        <dbReference type="Rhea" id="RHEA:15901"/>
        <dbReference type="ChEBI" id="CHEBI:58272"/>
        <dbReference type="ChEBI" id="CHEBI:58289"/>
        <dbReference type="EC" id="5.4.2.12"/>
    </reaction>
</comment>
<comment type="cofactor">
    <cofactor evidence="1">
        <name>Mn(2+)</name>
        <dbReference type="ChEBI" id="CHEBI:29035"/>
    </cofactor>
    <text evidence="1">Binds 2 manganese ions per subunit.</text>
</comment>
<comment type="pathway">
    <text evidence="1">Carbohydrate degradation; glycolysis; pyruvate from D-glyceraldehyde 3-phosphate: step 3/5.</text>
</comment>
<comment type="subunit">
    <text evidence="1">Monomer.</text>
</comment>
<comment type="similarity">
    <text evidence="1">Belongs to the BPG-independent phosphoglycerate mutase family.</text>
</comment>
<organism>
    <name type="scientific">Coxiella burnetii (strain RSA 493 / Nine Mile phase I)</name>
    <dbReference type="NCBI Taxonomy" id="227377"/>
    <lineage>
        <taxon>Bacteria</taxon>
        <taxon>Pseudomonadati</taxon>
        <taxon>Pseudomonadota</taxon>
        <taxon>Gammaproteobacteria</taxon>
        <taxon>Legionellales</taxon>
        <taxon>Coxiellaceae</taxon>
        <taxon>Coxiella</taxon>
    </lineage>
</organism>
<feature type="chain" id="PRO_0000212140" description="2,3-bisphosphoglycerate-independent phosphoglycerate mutase">
    <location>
        <begin position="1"/>
        <end position="519"/>
    </location>
</feature>
<feature type="active site" description="Phosphoserine intermediate" evidence="1">
    <location>
        <position position="68"/>
    </location>
</feature>
<feature type="binding site" evidence="1">
    <location>
        <position position="18"/>
    </location>
    <ligand>
        <name>Mn(2+)</name>
        <dbReference type="ChEBI" id="CHEBI:29035"/>
        <label>2</label>
    </ligand>
</feature>
<feature type="binding site" evidence="1">
    <location>
        <position position="68"/>
    </location>
    <ligand>
        <name>Mn(2+)</name>
        <dbReference type="ChEBI" id="CHEBI:29035"/>
        <label>2</label>
    </ligand>
</feature>
<feature type="binding site" evidence="1">
    <location>
        <position position="129"/>
    </location>
    <ligand>
        <name>substrate</name>
    </ligand>
</feature>
<feature type="binding site" evidence="1">
    <location>
        <begin position="159"/>
        <end position="160"/>
    </location>
    <ligand>
        <name>substrate</name>
    </ligand>
</feature>
<feature type="binding site" evidence="1">
    <location>
        <position position="191"/>
    </location>
    <ligand>
        <name>substrate</name>
    </ligand>
</feature>
<feature type="binding site" evidence="1">
    <location>
        <position position="197"/>
    </location>
    <ligand>
        <name>substrate</name>
    </ligand>
</feature>
<feature type="binding site" evidence="1">
    <location>
        <begin position="267"/>
        <end position="270"/>
    </location>
    <ligand>
        <name>substrate</name>
    </ligand>
</feature>
<feature type="binding site" evidence="1">
    <location>
        <position position="341"/>
    </location>
    <ligand>
        <name>substrate</name>
    </ligand>
</feature>
<feature type="binding site" evidence="1">
    <location>
        <position position="408"/>
    </location>
    <ligand>
        <name>Mn(2+)</name>
        <dbReference type="ChEBI" id="CHEBI:29035"/>
        <label>1</label>
    </ligand>
</feature>
<feature type="binding site" evidence="1">
    <location>
        <position position="412"/>
    </location>
    <ligand>
        <name>Mn(2+)</name>
        <dbReference type="ChEBI" id="CHEBI:29035"/>
        <label>1</label>
    </ligand>
</feature>
<feature type="binding site" evidence="1">
    <location>
        <position position="449"/>
    </location>
    <ligand>
        <name>Mn(2+)</name>
        <dbReference type="ChEBI" id="CHEBI:29035"/>
        <label>2</label>
    </ligand>
</feature>
<feature type="binding site" evidence="1">
    <location>
        <position position="450"/>
    </location>
    <ligand>
        <name>Mn(2+)</name>
        <dbReference type="ChEBI" id="CHEBI:29035"/>
        <label>2</label>
    </ligand>
</feature>
<feature type="binding site" evidence="1">
    <location>
        <position position="468"/>
    </location>
    <ligand>
        <name>Mn(2+)</name>
        <dbReference type="ChEBI" id="CHEBI:29035"/>
        <label>1</label>
    </ligand>
</feature>
<keyword id="KW-0324">Glycolysis</keyword>
<keyword id="KW-0413">Isomerase</keyword>
<keyword id="KW-0464">Manganese</keyword>
<keyword id="KW-0479">Metal-binding</keyword>
<keyword id="KW-1185">Reference proteome</keyword>
<evidence type="ECO:0000255" key="1">
    <source>
        <dbReference type="HAMAP-Rule" id="MF_01038"/>
    </source>
</evidence>
<reference key="1">
    <citation type="journal article" date="2003" name="Proc. Natl. Acad. Sci. U.S.A.">
        <title>Complete genome sequence of the Q-fever pathogen, Coxiella burnetii.</title>
        <authorList>
            <person name="Seshadri R."/>
            <person name="Paulsen I.T."/>
            <person name="Eisen J.A."/>
            <person name="Read T.D."/>
            <person name="Nelson K.E."/>
            <person name="Nelson W.C."/>
            <person name="Ward N.L."/>
            <person name="Tettelin H."/>
            <person name="Davidsen T.M."/>
            <person name="Beanan M.J."/>
            <person name="DeBoy R.T."/>
            <person name="Daugherty S.C."/>
            <person name="Brinkac L.M."/>
            <person name="Madupu R."/>
            <person name="Dodson R.J."/>
            <person name="Khouri H.M."/>
            <person name="Lee K.H."/>
            <person name="Carty H.A."/>
            <person name="Scanlan D."/>
            <person name="Heinzen R.A."/>
            <person name="Thompson H.A."/>
            <person name="Samuel J.E."/>
            <person name="Fraser C.M."/>
            <person name="Heidelberg J.F."/>
        </authorList>
    </citation>
    <scope>NUCLEOTIDE SEQUENCE [LARGE SCALE GENOMIC DNA]</scope>
    <source>
        <strain>RSA 493 / Nine Mile phase I</strain>
    </source>
</reference>
<dbReference type="EC" id="5.4.2.12" evidence="1"/>
<dbReference type="EMBL" id="AE016828">
    <property type="protein sequence ID" value="AAO91033.1"/>
    <property type="molecule type" value="Genomic_DNA"/>
</dbReference>
<dbReference type="RefSeq" id="WP_010958284.1">
    <property type="nucleotide sequence ID" value="NC_002971.4"/>
</dbReference>
<dbReference type="SMR" id="Q83BH2"/>
<dbReference type="STRING" id="227377.CBU_1536"/>
<dbReference type="DNASU" id="1209446"/>
<dbReference type="EnsemblBacteria" id="AAO91033">
    <property type="protein sequence ID" value="AAO91033"/>
    <property type="gene ID" value="CBU_1536"/>
</dbReference>
<dbReference type="KEGG" id="cbu:CBU_1536"/>
<dbReference type="PATRIC" id="fig|227377.7.peg.1540"/>
<dbReference type="eggNOG" id="COG0696">
    <property type="taxonomic scope" value="Bacteria"/>
</dbReference>
<dbReference type="HOGENOM" id="CLU_026099_2_0_6"/>
<dbReference type="OrthoDB" id="9800863at2"/>
<dbReference type="UniPathway" id="UPA00109">
    <property type="reaction ID" value="UER00186"/>
</dbReference>
<dbReference type="Proteomes" id="UP000002671">
    <property type="component" value="Chromosome"/>
</dbReference>
<dbReference type="GO" id="GO:0005829">
    <property type="term" value="C:cytosol"/>
    <property type="evidence" value="ECO:0000318"/>
    <property type="project" value="GO_Central"/>
</dbReference>
<dbReference type="GO" id="GO:0030145">
    <property type="term" value="F:manganese ion binding"/>
    <property type="evidence" value="ECO:0000318"/>
    <property type="project" value="GO_Central"/>
</dbReference>
<dbReference type="GO" id="GO:0004619">
    <property type="term" value="F:phosphoglycerate mutase activity"/>
    <property type="evidence" value="ECO:0000318"/>
    <property type="project" value="GO_Central"/>
</dbReference>
<dbReference type="GO" id="GO:0005975">
    <property type="term" value="P:carbohydrate metabolic process"/>
    <property type="evidence" value="ECO:0000318"/>
    <property type="project" value="GO_Central"/>
</dbReference>
<dbReference type="GO" id="GO:0006007">
    <property type="term" value="P:glucose catabolic process"/>
    <property type="evidence" value="ECO:0007669"/>
    <property type="project" value="InterPro"/>
</dbReference>
<dbReference type="GO" id="GO:0006096">
    <property type="term" value="P:glycolytic process"/>
    <property type="evidence" value="ECO:0007669"/>
    <property type="project" value="UniProtKB-UniRule"/>
</dbReference>
<dbReference type="CDD" id="cd16010">
    <property type="entry name" value="iPGM"/>
    <property type="match status" value="1"/>
</dbReference>
<dbReference type="FunFam" id="3.40.1450.10:FF:000001">
    <property type="entry name" value="2,3-bisphosphoglycerate-independent phosphoglycerate mutase"/>
    <property type="match status" value="1"/>
</dbReference>
<dbReference type="Gene3D" id="3.40.720.10">
    <property type="entry name" value="Alkaline Phosphatase, subunit A"/>
    <property type="match status" value="1"/>
</dbReference>
<dbReference type="Gene3D" id="3.40.1450.10">
    <property type="entry name" value="BPG-independent phosphoglycerate mutase, domain B"/>
    <property type="match status" value="1"/>
</dbReference>
<dbReference type="HAMAP" id="MF_01038">
    <property type="entry name" value="GpmI"/>
    <property type="match status" value="1"/>
</dbReference>
<dbReference type="InterPro" id="IPR017850">
    <property type="entry name" value="Alkaline_phosphatase_core_sf"/>
</dbReference>
<dbReference type="InterPro" id="IPR011258">
    <property type="entry name" value="BPG-indep_PGM_N"/>
</dbReference>
<dbReference type="InterPro" id="IPR006124">
    <property type="entry name" value="Metalloenzyme"/>
</dbReference>
<dbReference type="InterPro" id="IPR036646">
    <property type="entry name" value="PGAM_B_sf"/>
</dbReference>
<dbReference type="InterPro" id="IPR005995">
    <property type="entry name" value="Pgm_bpd_ind"/>
</dbReference>
<dbReference type="NCBIfam" id="TIGR01307">
    <property type="entry name" value="pgm_bpd_ind"/>
    <property type="match status" value="1"/>
</dbReference>
<dbReference type="PANTHER" id="PTHR31637">
    <property type="entry name" value="2,3-BISPHOSPHOGLYCERATE-INDEPENDENT PHOSPHOGLYCERATE MUTASE"/>
    <property type="match status" value="1"/>
</dbReference>
<dbReference type="PANTHER" id="PTHR31637:SF0">
    <property type="entry name" value="2,3-BISPHOSPHOGLYCERATE-INDEPENDENT PHOSPHOGLYCERATE MUTASE"/>
    <property type="match status" value="1"/>
</dbReference>
<dbReference type="Pfam" id="PF06415">
    <property type="entry name" value="iPGM_N"/>
    <property type="match status" value="1"/>
</dbReference>
<dbReference type="Pfam" id="PF01676">
    <property type="entry name" value="Metalloenzyme"/>
    <property type="match status" value="1"/>
</dbReference>
<dbReference type="PIRSF" id="PIRSF001492">
    <property type="entry name" value="IPGAM"/>
    <property type="match status" value="1"/>
</dbReference>
<dbReference type="SUPFAM" id="SSF64158">
    <property type="entry name" value="2,3-Bisphosphoglycerate-independent phosphoglycerate mutase, substrate-binding domain"/>
    <property type="match status" value="1"/>
</dbReference>
<dbReference type="SUPFAM" id="SSF53649">
    <property type="entry name" value="Alkaline phosphatase-like"/>
    <property type="match status" value="1"/>
</dbReference>
<protein>
    <recommendedName>
        <fullName evidence="1">2,3-bisphosphoglycerate-independent phosphoglycerate mutase</fullName>
        <shortName evidence="1">BPG-independent PGAM</shortName>
        <shortName evidence="1">Phosphoglyceromutase</shortName>
        <shortName evidence="1">iPGM</shortName>
        <ecNumber evidence="1">5.4.2.12</ecNumber>
    </recommendedName>
</protein>
<proteinExistence type="inferred from homology"/>
<sequence length="519" mass="57510">MTQADNQNPKPMVLIILDGFGESDETTHNAIKEANTPTLDKLFRHYPHTLLEASGRAVGLPDGQMGNSEVGHLHIGGGRKVPQDLTRIDAAIASGEFYENPALIEALEKAKALNKAVHILGLLSPGGVHSRDNQIAALVELAHRCGIKKIYLHAILDGRDTPPKSALLSIEKITDQFHAYGNGKIASLIGRYYAMDRDKRWDRTEKAYDLLTQGTAQFHALTAKEGLMLAYEQGNTDEFVSPTSIHRHNETPITIEDGDVVVFMNFRADRARQLTYAFLDDHFTAFNRQVRPKLSAFVTLTAYAKDIHAAVAFPPLELHNTLGEYLSARGYRQLRIAETEKYAHVTYFLNGGQEAPFNGEDRLLIPSPKVATYDLQPEMSAVEMTNKLVEIIQNDDYDLIVCNFANPDMVGHTGDETATREAIQVIDDCLKRIITALQSVGGEALITADHGNAEKMFDEKTNQPHTAHTSNLVPLIYVGREAQFCKEVGALDDVAPTLLYLMGLEKPREMTGRNLITLK</sequence>